<dbReference type="EC" id="5.4.99.27" evidence="1"/>
<dbReference type="EMBL" id="CR936257">
    <property type="protein sequence ID" value="CAI50705.1"/>
    <property type="molecule type" value="Genomic_DNA"/>
</dbReference>
<dbReference type="RefSeq" id="WP_011324315.1">
    <property type="nucleotide sequence ID" value="NC_007426.1"/>
</dbReference>
<dbReference type="SMR" id="Q3IMF3"/>
<dbReference type="STRING" id="348780.NP_5228A"/>
<dbReference type="EnsemblBacteria" id="CAI50705">
    <property type="protein sequence ID" value="CAI50705"/>
    <property type="gene ID" value="NP_5228A"/>
</dbReference>
<dbReference type="GeneID" id="3702304"/>
<dbReference type="KEGG" id="nph:NP_5228A"/>
<dbReference type="eggNOG" id="arCOG04252">
    <property type="taxonomic scope" value="Archaea"/>
</dbReference>
<dbReference type="HOGENOM" id="CLU_005281_4_1_2"/>
<dbReference type="OrthoDB" id="1798at2157"/>
<dbReference type="Proteomes" id="UP000002698">
    <property type="component" value="Chromosome"/>
</dbReference>
<dbReference type="GO" id="GO:0003723">
    <property type="term" value="F:RNA binding"/>
    <property type="evidence" value="ECO:0007669"/>
    <property type="project" value="InterPro"/>
</dbReference>
<dbReference type="GO" id="GO:0160150">
    <property type="term" value="F:tRNA pseudouridine(13) synthase activity"/>
    <property type="evidence" value="ECO:0007669"/>
    <property type="project" value="UniProtKB-EC"/>
</dbReference>
<dbReference type="GO" id="GO:0031119">
    <property type="term" value="P:tRNA pseudouridine synthesis"/>
    <property type="evidence" value="ECO:0007669"/>
    <property type="project" value="UniProtKB-UniRule"/>
</dbReference>
<dbReference type="Gene3D" id="1.10.1510.30">
    <property type="match status" value="1"/>
</dbReference>
<dbReference type="Gene3D" id="3.30.70.3160">
    <property type="match status" value="1"/>
</dbReference>
<dbReference type="Gene3D" id="3.30.2350.20">
    <property type="entry name" value="TruD, catalytic domain"/>
    <property type="match status" value="1"/>
</dbReference>
<dbReference type="HAMAP" id="MF_01082">
    <property type="entry name" value="TruD"/>
    <property type="match status" value="1"/>
</dbReference>
<dbReference type="InterPro" id="IPR020103">
    <property type="entry name" value="PsdUridine_synth_cat_dom_sf"/>
</dbReference>
<dbReference type="InterPro" id="IPR001656">
    <property type="entry name" value="PsdUridine_synth_TruD"/>
</dbReference>
<dbReference type="InterPro" id="IPR020119">
    <property type="entry name" value="PsdUridine_synth_TruD_CS"/>
</dbReference>
<dbReference type="InterPro" id="IPR011760">
    <property type="entry name" value="PsdUridine_synth_TruD_insert"/>
</dbReference>
<dbReference type="InterPro" id="IPR042214">
    <property type="entry name" value="TruD_catalytic"/>
</dbReference>
<dbReference type="NCBIfam" id="NF002158">
    <property type="entry name" value="PRK00984.2-3"/>
    <property type="match status" value="1"/>
</dbReference>
<dbReference type="NCBIfam" id="TIGR00094">
    <property type="entry name" value="tRNA_TruD_broad"/>
    <property type="match status" value="1"/>
</dbReference>
<dbReference type="PANTHER" id="PTHR13326:SF21">
    <property type="entry name" value="PSEUDOURIDYLATE SYNTHASE PUS7L"/>
    <property type="match status" value="1"/>
</dbReference>
<dbReference type="PANTHER" id="PTHR13326">
    <property type="entry name" value="TRNA PSEUDOURIDINE SYNTHASE D"/>
    <property type="match status" value="1"/>
</dbReference>
<dbReference type="Pfam" id="PF01142">
    <property type="entry name" value="TruD"/>
    <property type="match status" value="1"/>
</dbReference>
<dbReference type="PIRSF" id="PIRSF037016">
    <property type="entry name" value="Pseudouridin_synth_euk_prd"/>
    <property type="match status" value="1"/>
</dbReference>
<dbReference type="SUPFAM" id="SSF55120">
    <property type="entry name" value="Pseudouridine synthase"/>
    <property type="match status" value="1"/>
</dbReference>
<dbReference type="PROSITE" id="PS50984">
    <property type="entry name" value="TRUD"/>
    <property type="match status" value="1"/>
</dbReference>
<dbReference type="PROSITE" id="PS01268">
    <property type="entry name" value="UPF0024"/>
    <property type="match status" value="1"/>
</dbReference>
<organism>
    <name type="scientific">Natronomonas pharaonis (strain ATCC 35678 / DSM 2160 / CIP 103997 / JCM 8858 / NBRC 14720 / NCIMB 2260 / Gabara)</name>
    <name type="common">Halobacterium pharaonis</name>
    <dbReference type="NCBI Taxonomy" id="348780"/>
    <lineage>
        <taxon>Archaea</taxon>
        <taxon>Methanobacteriati</taxon>
        <taxon>Methanobacteriota</taxon>
        <taxon>Stenosarchaea group</taxon>
        <taxon>Halobacteria</taxon>
        <taxon>Halobacteriales</taxon>
        <taxon>Haloarculaceae</taxon>
        <taxon>Natronomonas</taxon>
    </lineage>
</organism>
<accession>Q3IMF3</accession>
<evidence type="ECO:0000255" key="1">
    <source>
        <dbReference type="HAMAP-Rule" id="MF_01082"/>
    </source>
</evidence>
<gene>
    <name evidence="1" type="primary">truD</name>
    <name type="ordered locus">NP_5228A</name>
</gene>
<comment type="function">
    <text evidence="1">Could be responsible for synthesis of pseudouridine from uracil-13 in transfer RNAs.</text>
</comment>
<comment type="catalytic activity">
    <reaction evidence="1">
        <text>uridine(13) in tRNA = pseudouridine(13) in tRNA</text>
        <dbReference type="Rhea" id="RHEA:42540"/>
        <dbReference type="Rhea" id="RHEA-COMP:10105"/>
        <dbReference type="Rhea" id="RHEA-COMP:10106"/>
        <dbReference type="ChEBI" id="CHEBI:65314"/>
        <dbReference type="ChEBI" id="CHEBI:65315"/>
        <dbReference type="EC" id="5.4.99.27"/>
    </reaction>
</comment>
<comment type="similarity">
    <text evidence="1">Belongs to the pseudouridine synthase TruD family.</text>
</comment>
<keyword id="KW-0413">Isomerase</keyword>
<keyword id="KW-1185">Reference proteome</keyword>
<keyword id="KW-0819">tRNA processing</keyword>
<feature type="chain" id="PRO_0000230160" description="Probable tRNA pseudouridine synthase D">
    <location>
        <begin position="1"/>
        <end position="435"/>
    </location>
</feature>
<feature type="domain" description="TRUD" evidence="1">
    <location>
        <begin position="170"/>
        <end position="396"/>
    </location>
</feature>
<feature type="active site" description="Nucleophile" evidence="1">
    <location>
        <position position="95"/>
    </location>
</feature>
<name>TRUD_NATPD</name>
<reference key="1">
    <citation type="journal article" date="2005" name="Genome Res.">
        <title>Living with two extremes: conclusions from the genome sequence of Natronomonas pharaonis.</title>
        <authorList>
            <person name="Falb M."/>
            <person name="Pfeiffer F."/>
            <person name="Palm P."/>
            <person name="Rodewald K."/>
            <person name="Hickmann V."/>
            <person name="Tittor J."/>
            <person name="Oesterhelt D."/>
        </authorList>
    </citation>
    <scope>NUCLEOTIDE SEQUENCE [LARGE SCALE GENOMIC DNA]</scope>
    <source>
        <strain>ATCC 35678 / DSM 2160 / CIP 103997 / JCM 8858 / NBRC 14720 / NCIMB 2260 / Gabara</strain>
    </source>
</reference>
<sequence>MRDSHPVEQTVGIEYYVTETDGTGGRLRDRPADFRVREREAFGADCRPLDADPGSYPHLVFRATLREWDTNDFASAVSNALGVSRERVSWAGTKDKHAVTTQLFSVRHDDAALPDLDGADIEPIGRAGRPVLFGDLAGNEFELVIRDPDRPEHAEATAAELCDFGGGEAGVPNYFGTQRFGSRRPITHRVGLDVLDGDWEAAAVRYVCESSEREPERTQEVREGIDADRDWAAAGERLPGSLRFERAIANRLAEGAESPDDYRAALEELPSNLQRMFVNAAQSYVFNRILSERLRRGLPFDEPVVGDVVCFSDSDGNPDPDRTQTVTESRLETVRRHCERGRAFVTAPLVGTETVFGDGEPAEITREVLADVDVSPTDFELPGEFGSSGTRRAVLVTTDLTVEQEPLTLSFSLPKGSYATVVAREFLKADPEALS</sequence>
<protein>
    <recommendedName>
        <fullName evidence="1">Probable tRNA pseudouridine synthase D</fullName>
        <ecNumber evidence="1">5.4.99.27</ecNumber>
    </recommendedName>
    <alternativeName>
        <fullName evidence="1">tRNA pseudouridine(13) synthase</fullName>
    </alternativeName>
    <alternativeName>
        <fullName evidence="1">tRNA pseudouridylate synthase D</fullName>
    </alternativeName>
    <alternativeName>
        <fullName evidence="1">tRNA-uridine isomerase D</fullName>
    </alternativeName>
</protein>
<proteinExistence type="inferred from homology"/>